<dbReference type="EMBL" id="CU928158">
    <property type="protein sequence ID" value="CAQ89974.1"/>
    <property type="status" value="ALT_INIT"/>
    <property type="molecule type" value="Genomic_DNA"/>
</dbReference>
<dbReference type="RefSeq" id="WP_000503935.1">
    <property type="nucleotide sequence ID" value="NC_011740.1"/>
</dbReference>
<dbReference type="SMR" id="B7LLI4"/>
<dbReference type="GeneID" id="75056487"/>
<dbReference type="KEGG" id="efe:EFER_2477"/>
<dbReference type="HOGENOM" id="CLU_086034_5_3_6"/>
<dbReference type="OrthoDB" id="7066617at2"/>
<dbReference type="Proteomes" id="UP000000745">
    <property type="component" value="Chromosome"/>
</dbReference>
<dbReference type="GO" id="GO:0033281">
    <property type="term" value="C:TAT protein transport complex"/>
    <property type="evidence" value="ECO:0007669"/>
    <property type="project" value="UniProtKB-UniRule"/>
</dbReference>
<dbReference type="GO" id="GO:0008320">
    <property type="term" value="F:protein transmembrane transporter activity"/>
    <property type="evidence" value="ECO:0007669"/>
    <property type="project" value="UniProtKB-UniRule"/>
</dbReference>
<dbReference type="GO" id="GO:0043953">
    <property type="term" value="P:protein transport by the Tat complex"/>
    <property type="evidence" value="ECO:0007669"/>
    <property type="project" value="UniProtKB-UniRule"/>
</dbReference>
<dbReference type="FunFam" id="1.20.5.3310:FF:000001">
    <property type="entry name" value="Probable Sec-independent protein translocase protein TatE"/>
    <property type="match status" value="1"/>
</dbReference>
<dbReference type="Gene3D" id="1.20.5.3310">
    <property type="match status" value="1"/>
</dbReference>
<dbReference type="HAMAP" id="MF_00236">
    <property type="entry name" value="TatA_E"/>
    <property type="match status" value="1"/>
</dbReference>
<dbReference type="HAMAP" id="MF_00903">
    <property type="entry name" value="TatE"/>
    <property type="match status" value="1"/>
</dbReference>
<dbReference type="InterPro" id="IPR003369">
    <property type="entry name" value="TatA/B/E"/>
</dbReference>
<dbReference type="InterPro" id="IPR006312">
    <property type="entry name" value="TatA/E"/>
</dbReference>
<dbReference type="InterPro" id="IPR024905">
    <property type="entry name" value="TatE"/>
</dbReference>
<dbReference type="NCBIfam" id="NF002448">
    <property type="entry name" value="PRK01614.1"/>
    <property type="match status" value="1"/>
</dbReference>
<dbReference type="NCBIfam" id="NF002960">
    <property type="entry name" value="PRK03625.1"/>
    <property type="match status" value="1"/>
</dbReference>
<dbReference type="NCBIfam" id="TIGR01411">
    <property type="entry name" value="tatAE"/>
    <property type="match status" value="1"/>
</dbReference>
<dbReference type="PANTHER" id="PTHR42982">
    <property type="entry name" value="SEC-INDEPENDENT PROTEIN TRANSLOCASE PROTEIN TATA"/>
    <property type="match status" value="1"/>
</dbReference>
<dbReference type="PANTHER" id="PTHR42982:SF5">
    <property type="entry name" value="SEC-INDEPENDENT PROTEIN TRANSLOCASE PROTEIN TATE"/>
    <property type="match status" value="1"/>
</dbReference>
<dbReference type="Pfam" id="PF02416">
    <property type="entry name" value="TatA_B_E"/>
    <property type="match status" value="1"/>
</dbReference>
<accession>B7LLI4</accession>
<gene>
    <name evidence="1" type="primary">tatE</name>
    <name type="ordered locus">EFER_2477</name>
</gene>
<sequence>MGEISITKLLVVAALVVLLFGTKKLRTLGGDLGAAIKGFKKAMNDEDAGAKKDANGDLPAEKLTHKE</sequence>
<reference key="1">
    <citation type="journal article" date="2009" name="PLoS Genet.">
        <title>Organised genome dynamics in the Escherichia coli species results in highly diverse adaptive paths.</title>
        <authorList>
            <person name="Touchon M."/>
            <person name="Hoede C."/>
            <person name="Tenaillon O."/>
            <person name="Barbe V."/>
            <person name="Baeriswyl S."/>
            <person name="Bidet P."/>
            <person name="Bingen E."/>
            <person name="Bonacorsi S."/>
            <person name="Bouchier C."/>
            <person name="Bouvet O."/>
            <person name="Calteau A."/>
            <person name="Chiapello H."/>
            <person name="Clermont O."/>
            <person name="Cruveiller S."/>
            <person name="Danchin A."/>
            <person name="Diard M."/>
            <person name="Dossat C."/>
            <person name="Karoui M.E."/>
            <person name="Frapy E."/>
            <person name="Garry L."/>
            <person name="Ghigo J.M."/>
            <person name="Gilles A.M."/>
            <person name="Johnson J."/>
            <person name="Le Bouguenec C."/>
            <person name="Lescat M."/>
            <person name="Mangenot S."/>
            <person name="Martinez-Jehanne V."/>
            <person name="Matic I."/>
            <person name="Nassif X."/>
            <person name="Oztas S."/>
            <person name="Petit M.A."/>
            <person name="Pichon C."/>
            <person name="Rouy Z."/>
            <person name="Ruf C.S."/>
            <person name="Schneider D."/>
            <person name="Tourret J."/>
            <person name="Vacherie B."/>
            <person name="Vallenet D."/>
            <person name="Medigue C."/>
            <person name="Rocha E.P.C."/>
            <person name="Denamur E."/>
        </authorList>
    </citation>
    <scope>NUCLEOTIDE SEQUENCE [LARGE SCALE GENOMIC DNA]</scope>
    <source>
        <strain>ATCC 35469 / DSM 13698 / BCRC 15582 / CCUG 18766 / IAM 14443 / JCM 21226 / LMG 7866 / NBRC 102419 / NCTC 12128 / CDC 0568-73</strain>
    </source>
</reference>
<feature type="chain" id="PRO_0000412968" description="Probable Sec-independent protein translocase protein TatE">
    <location>
        <begin position="1"/>
        <end position="67"/>
    </location>
</feature>
<feature type="transmembrane region" description="Helical" evidence="1">
    <location>
        <begin position="1"/>
        <end position="21"/>
    </location>
</feature>
<feature type="region of interest" description="Disordered" evidence="2">
    <location>
        <begin position="45"/>
        <end position="67"/>
    </location>
</feature>
<protein>
    <recommendedName>
        <fullName evidence="1">Probable Sec-independent protein translocase protein TatE</fullName>
    </recommendedName>
</protein>
<proteinExistence type="inferred from homology"/>
<name>TATE_ESCF3</name>
<keyword id="KW-0997">Cell inner membrane</keyword>
<keyword id="KW-1003">Cell membrane</keyword>
<keyword id="KW-0472">Membrane</keyword>
<keyword id="KW-0653">Protein transport</keyword>
<keyword id="KW-0811">Translocation</keyword>
<keyword id="KW-0812">Transmembrane</keyword>
<keyword id="KW-1133">Transmembrane helix</keyword>
<keyword id="KW-0813">Transport</keyword>
<organism>
    <name type="scientific">Escherichia fergusonii (strain ATCC 35469 / DSM 13698 / CCUG 18766 / IAM 14443 / JCM 21226 / LMG 7866 / NBRC 102419 / NCTC 12128 / CDC 0568-73)</name>
    <dbReference type="NCBI Taxonomy" id="585054"/>
    <lineage>
        <taxon>Bacteria</taxon>
        <taxon>Pseudomonadati</taxon>
        <taxon>Pseudomonadota</taxon>
        <taxon>Gammaproteobacteria</taxon>
        <taxon>Enterobacterales</taxon>
        <taxon>Enterobacteriaceae</taxon>
        <taxon>Escherichia</taxon>
    </lineage>
</organism>
<comment type="function">
    <text evidence="1">Part of the twin-arginine translocation (Tat) system that transports large folded proteins containing a characteristic twin-arginine motif in their signal peptide across membranes. TatE shares overlapping functions with TatA.</text>
</comment>
<comment type="subcellular location">
    <subcellularLocation>
        <location evidence="1">Cell inner membrane</location>
        <topology evidence="1">Single-pass membrane protein</topology>
    </subcellularLocation>
</comment>
<comment type="similarity">
    <text evidence="1">Belongs to the TatA/E family. TatE subfamily.</text>
</comment>
<comment type="sequence caution" evidence="3">
    <conflict type="erroneous initiation">
        <sequence resource="EMBL-CDS" id="CAQ89974"/>
    </conflict>
    <text>Extended N-terminus.</text>
</comment>
<evidence type="ECO:0000255" key="1">
    <source>
        <dbReference type="HAMAP-Rule" id="MF_00903"/>
    </source>
</evidence>
<evidence type="ECO:0000256" key="2">
    <source>
        <dbReference type="SAM" id="MobiDB-lite"/>
    </source>
</evidence>
<evidence type="ECO:0000305" key="3"/>